<proteinExistence type="inferred from homology"/>
<protein>
    <recommendedName>
        <fullName>Putative non-inhibitory serpin-10</fullName>
    </recommendedName>
    <alternativeName>
        <fullName>OrysaZ10</fullName>
    </alternativeName>
</protein>
<feature type="chain" id="PRO_0000334562" description="Putative non-inhibitory serpin-10">
    <location>
        <begin position="1"/>
        <end position="392"/>
    </location>
</feature>
<feature type="region of interest" description="RCL">
    <location>
        <begin position="333"/>
        <end position="357"/>
    </location>
</feature>
<feature type="site" description="Reactive bond" evidence="2">
    <location>
        <begin position="347"/>
        <end position="348"/>
    </location>
</feature>
<gene>
    <name type="ordered locus">Os04g0533700</name>
    <name type="ordered locus">LOC_Os04g45110</name>
    <name type="ORF">OSJNBb0039L24.17</name>
</gene>
<name>SPZ10_ORYSJ</name>
<sequence length="392" mass="43261">MDYCLQVAWIAGTKAITEQSNFMFSPLGLRAGLALLATGTDGETLRQLLAFLGSQHIHQLNAASAGLLAEMRAWPQLSFAAGIFVDRSLRLRPEFQSTAAAAHGAFPRSVDFQNQANAAAAEVNRFISQATNGRLNNTISPGTFGSSTKCVLANAMHFKATWGRKFESYDTQRRRFHRQDGTRVTVPFLSDPRTHYAARFDGLGFKVLQLFYKMVGHDGQVHFGAPCFCMLVFLPIKRDGLRHLLRMAVTEPDFVMRCVPRSEQEVSPCMVPKFKFSSELDARGALAKLGLGAPFDPLAADLSRMAVSVNTPPERLYVSAMRQKCAVEVDEEGTTAVEATYSCCSPTYSGPESPKPRPMSFVAEHPFMFAIVEYEKAQVLFLGHVMDPSNEE</sequence>
<accession>Q7XMK1</accession>
<accession>A0A0P0WD79</accession>
<keyword id="KW-1185">Reference proteome</keyword>
<comment type="domain">
    <text evidence="1">The reactive center loop (RCL) extends out from the body of the protein and directs binding to the target protease. The protease cleaves the serpin at the reactive site within the RCL, establishing a covalent linkage between the carboxyl group of the serpin reactive site and the serine hydroxyl of the protease. The resulting inactive serpin-protease complex is highly stable (By similarity).</text>
</comment>
<comment type="similarity">
    <text evidence="3">Belongs to the serpin family.</text>
</comment>
<comment type="caution">
    <text evidence="3">According to PubMed:18060440, it is predicted to be a non-inhibitory serpin due to Val-337 and Glu-338 which differ from the conserved residues in the reactive center loop (RCL) that is involved after cleavage in covalent linking and inhibition of the target proteinase.</text>
</comment>
<dbReference type="EMBL" id="AL663006">
    <property type="protein sequence ID" value="CAE04578.1"/>
    <property type="molecule type" value="Genomic_DNA"/>
</dbReference>
<dbReference type="EMBL" id="AP014960">
    <property type="protein sequence ID" value="BAS90237.1"/>
    <property type="molecule type" value="Genomic_DNA"/>
</dbReference>
<dbReference type="SMR" id="Q7XMK1"/>
<dbReference type="FunCoup" id="Q7XMK1">
    <property type="interactions" value="16"/>
</dbReference>
<dbReference type="STRING" id="39947.Q7XMK1"/>
<dbReference type="PaxDb" id="39947-Q7XMK1"/>
<dbReference type="EnsemblPlants" id="Os04t0533700-00">
    <property type="protein sequence ID" value="Os04t0533700-00"/>
    <property type="gene ID" value="Os04g0533700"/>
</dbReference>
<dbReference type="Gramene" id="Os04t0533700-00">
    <property type="protein sequence ID" value="Os04t0533700-00"/>
    <property type="gene ID" value="Os04g0533700"/>
</dbReference>
<dbReference type="eggNOG" id="KOG2392">
    <property type="taxonomic scope" value="Eukaryota"/>
</dbReference>
<dbReference type="HOGENOM" id="CLU_023330_4_0_1"/>
<dbReference type="InParanoid" id="Q7XMK1"/>
<dbReference type="OMA" id="RVAHKCF"/>
<dbReference type="Proteomes" id="UP000000763">
    <property type="component" value="Chromosome 4"/>
</dbReference>
<dbReference type="Proteomes" id="UP000059680">
    <property type="component" value="Chromosome 4"/>
</dbReference>
<dbReference type="GO" id="GO:0005615">
    <property type="term" value="C:extracellular space"/>
    <property type="evidence" value="ECO:0000318"/>
    <property type="project" value="GO_Central"/>
</dbReference>
<dbReference type="GO" id="GO:0004867">
    <property type="term" value="F:serine-type endopeptidase inhibitor activity"/>
    <property type="evidence" value="ECO:0007669"/>
    <property type="project" value="InterPro"/>
</dbReference>
<dbReference type="CDD" id="cd02043">
    <property type="entry name" value="serpinP_plants"/>
    <property type="match status" value="1"/>
</dbReference>
<dbReference type="FunFam" id="2.30.39.10:FF:000036">
    <property type="entry name" value="Putative non-inhibitory serpin-10"/>
    <property type="match status" value="1"/>
</dbReference>
<dbReference type="Gene3D" id="2.30.39.10">
    <property type="entry name" value="Alpha-1-antitrypsin, domain 1"/>
    <property type="match status" value="1"/>
</dbReference>
<dbReference type="Gene3D" id="3.30.497.10">
    <property type="entry name" value="Antithrombin, subunit I, domain 2"/>
    <property type="match status" value="1"/>
</dbReference>
<dbReference type="InterPro" id="IPR023796">
    <property type="entry name" value="Serpin_dom"/>
</dbReference>
<dbReference type="InterPro" id="IPR000215">
    <property type="entry name" value="Serpin_fam"/>
</dbReference>
<dbReference type="InterPro" id="IPR036186">
    <property type="entry name" value="Serpin_sf"/>
</dbReference>
<dbReference type="InterPro" id="IPR042178">
    <property type="entry name" value="Serpin_sf_1"/>
</dbReference>
<dbReference type="InterPro" id="IPR042185">
    <property type="entry name" value="Serpin_sf_2"/>
</dbReference>
<dbReference type="PANTHER" id="PTHR11461:SF286">
    <property type="entry name" value="NON-INHIBITORY SERPIN-Z11-RELATED"/>
    <property type="match status" value="1"/>
</dbReference>
<dbReference type="PANTHER" id="PTHR11461">
    <property type="entry name" value="SERINE PROTEASE INHIBITOR, SERPIN"/>
    <property type="match status" value="1"/>
</dbReference>
<dbReference type="Pfam" id="PF00079">
    <property type="entry name" value="Serpin"/>
    <property type="match status" value="1"/>
</dbReference>
<dbReference type="SMART" id="SM00093">
    <property type="entry name" value="SERPIN"/>
    <property type="match status" value="1"/>
</dbReference>
<dbReference type="SUPFAM" id="SSF56574">
    <property type="entry name" value="Serpins"/>
    <property type="match status" value="1"/>
</dbReference>
<organism>
    <name type="scientific">Oryza sativa subsp. japonica</name>
    <name type="common">Rice</name>
    <dbReference type="NCBI Taxonomy" id="39947"/>
    <lineage>
        <taxon>Eukaryota</taxon>
        <taxon>Viridiplantae</taxon>
        <taxon>Streptophyta</taxon>
        <taxon>Embryophyta</taxon>
        <taxon>Tracheophyta</taxon>
        <taxon>Spermatophyta</taxon>
        <taxon>Magnoliopsida</taxon>
        <taxon>Liliopsida</taxon>
        <taxon>Poales</taxon>
        <taxon>Poaceae</taxon>
        <taxon>BOP clade</taxon>
        <taxon>Oryzoideae</taxon>
        <taxon>Oryzeae</taxon>
        <taxon>Oryzinae</taxon>
        <taxon>Oryza</taxon>
        <taxon>Oryza sativa</taxon>
    </lineage>
</organism>
<reference key="1">
    <citation type="journal article" date="2002" name="Nature">
        <title>Sequence and analysis of rice chromosome 4.</title>
        <authorList>
            <person name="Feng Q."/>
            <person name="Zhang Y."/>
            <person name="Hao P."/>
            <person name="Wang S."/>
            <person name="Fu G."/>
            <person name="Huang Y."/>
            <person name="Li Y."/>
            <person name="Zhu J."/>
            <person name="Liu Y."/>
            <person name="Hu X."/>
            <person name="Jia P."/>
            <person name="Zhang Y."/>
            <person name="Zhao Q."/>
            <person name="Ying K."/>
            <person name="Yu S."/>
            <person name="Tang Y."/>
            <person name="Weng Q."/>
            <person name="Zhang L."/>
            <person name="Lu Y."/>
            <person name="Mu J."/>
            <person name="Lu Y."/>
            <person name="Zhang L.S."/>
            <person name="Yu Z."/>
            <person name="Fan D."/>
            <person name="Liu X."/>
            <person name="Lu T."/>
            <person name="Li C."/>
            <person name="Wu Y."/>
            <person name="Sun T."/>
            <person name="Lei H."/>
            <person name="Li T."/>
            <person name="Hu H."/>
            <person name="Guan J."/>
            <person name="Wu M."/>
            <person name="Zhang R."/>
            <person name="Zhou B."/>
            <person name="Chen Z."/>
            <person name="Chen L."/>
            <person name="Jin Z."/>
            <person name="Wang R."/>
            <person name="Yin H."/>
            <person name="Cai Z."/>
            <person name="Ren S."/>
            <person name="Lv G."/>
            <person name="Gu W."/>
            <person name="Zhu G."/>
            <person name="Tu Y."/>
            <person name="Jia J."/>
            <person name="Zhang Y."/>
            <person name="Chen J."/>
            <person name="Kang H."/>
            <person name="Chen X."/>
            <person name="Shao C."/>
            <person name="Sun Y."/>
            <person name="Hu Q."/>
            <person name="Zhang X."/>
            <person name="Zhang W."/>
            <person name="Wang L."/>
            <person name="Ding C."/>
            <person name="Sheng H."/>
            <person name="Gu J."/>
            <person name="Chen S."/>
            <person name="Ni L."/>
            <person name="Zhu F."/>
            <person name="Chen W."/>
            <person name="Lan L."/>
            <person name="Lai Y."/>
            <person name="Cheng Z."/>
            <person name="Gu M."/>
            <person name="Jiang J."/>
            <person name="Li J."/>
            <person name="Hong G."/>
            <person name="Xue Y."/>
            <person name="Han B."/>
        </authorList>
    </citation>
    <scope>NUCLEOTIDE SEQUENCE [LARGE SCALE GENOMIC DNA]</scope>
    <source>
        <strain>cv. Nipponbare</strain>
    </source>
</reference>
<reference key="2">
    <citation type="journal article" date="2005" name="Nature">
        <title>The map-based sequence of the rice genome.</title>
        <authorList>
            <consortium name="International rice genome sequencing project (IRGSP)"/>
        </authorList>
    </citation>
    <scope>NUCLEOTIDE SEQUENCE [LARGE SCALE GENOMIC DNA]</scope>
    <source>
        <strain>cv. Nipponbare</strain>
    </source>
</reference>
<reference key="3">
    <citation type="journal article" date="2013" name="Rice">
        <title>Improvement of the Oryza sativa Nipponbare reference genome using next generation sequence and optical map data.</title>
        <authorList>
            <person name="Kawahara Y."/>
            <person name="de la Bastide M."/>
            <person name="Hamilton J.P."/>
            <person name="Kanamori H."/>
            <person name="McCombie W.R."/>
            <person name="Ouyang S."/>
            <person name="Schwartz D.C."/>
            <person name="Tanaka T."/>
            <person name="Wu J."/>
            <person name="Zhou S."/>
            <person name="Childs K.L."/>
            <person name="Davidson R.M."/>
            <person name="Lin H."/>
            <person name="Quesada-Ocampo L."/>
            <person name="Vaillancourt B."/>
            <person name="Sakai H."/>
            <person name="Lee S.S."/>
            <person name="Kim J."/>
            <person name="Numa H."/>
            <person name="Itoh T."/>
            <person name="Buell C.R."/>
            <person name="Matsumoto T."/>
        </authorList>
    </citation>
    <scope>GENOME REANNOTATION</scope>
    <source>
        <strain>cv. Nipponbare</strain>
    </source>
</reference>
<reference key="4">
    <citation type="journal article" date="2008" name="Funct. Integr. Genomics">
        <title>Serpins in plants and green algae.</title>
        <authorList>
            <person name="Roberts T.H."/>
            <person name="Hejgaard J."/>
        </authorList>
    </citation>
    <scope>GENE FAMILY</scope>
    <scope>NOMENCLATURE</scope>
</reference>
<evidence type="ECO:0000250" key="1"/>
<evidence type="ECO:0000255" key="2"/>
<evidence type="ECO:0000305" key="3"/>